<name>APTB_PHOV8</name>
<keyword id="KW-0119">Carbohydrate metabolism</keyword>
<keyword id="KW-0786">Thiamine pyrophosphate</keyword>
<keyword id="KW-0808">Transferase</keyword>
<organism>
    <name type="scientific">Phocaeicola vulgatus (strain ATCC 8482 / DSM 1447 / JCM 5826 / CCUG 4940 / NBRC 14291 / NCTC 11154)</name>
    <name type="common">Bacteroides vulgatus</name>
    <dbReference type="NCBI Taxonomy" id="435590"/>
    <lineage>
        <taxon>Bacteria</taxon>
        <taxon>Pseudomonadati</taxon>
        <taxon>Bacteroidota</taxon>
        <taxon>Bacteroidia</taxon>
        <taxon>Bacteroidales</taxon>
        <taxon>Bacteroidaceae</taxon>
        <taxon>Phocaeicola</taxon>
    </lineage>
</organism>
<feature type="chain" id="PRO_0000446028" description="Apulose-4-phosphate transketolase subunit B">
    <location>
        <begin position="1"/>
        <end position="312"/>
    </location>
</feature>
<gene>
    <name evidence="4" type="primary">aptB</name>
    <name evidence="5" type="ordered locus">BVU_0358</name>
</gene>
<evidence type="ECO:0000250" key="1">
    <source>
        <dbReference type="UniProtKB" id="P29401"/>
    </source>
</evidence>
<evidence type="ECO:0000269" key="2">
    <source>
    </source>
</evidence>
<evidence type="ECO:0000305" key="3"/>
<evidence type="ECO:0000305" key="4">
    <source>
    </source>
</evidence>
<evidence type="ECO:0000312" key="5">
    <source>
        <dbReference type="EMBL" id="ABR38077.1"/>
    </source>
</evidence>
<dbReference type="EC" id="2.2.1.13" evidence="2"/>
<dbReference type="EMBL" id="CP000139">
    <property type="protein sequence ID" value="ABR38077.1"/>
    <property type="molecule type" value="Genomic_DNA"/>
</dbReference>
<dbReference type="RefSeq" id="WP_005842354.1">
    <property type="nucleotide sequence ID" value="NZ_CAXUAI010000006.1"/>
</dbReference>
<dbReference type="SMR" id="A6KXB3"/>
<dbReference type="STRING" id="435590.BVU_0358"/>
<dbReference type="PaxDb" id="435590-BVU_0358"/>
<dbReference type="GeneID" id="5301327"/>
<dbReference type="KEGG" id="bvu:BVU_0358"/>
<dbReference type="eggNOG" id="COG3958">
    <property type="taxonomic scope" value="Bacteria"/>
</dbReference>
<dbReference type="HOGENOM" id="CLU_009227_1_1_10"/>
<dbReference type="BioCyc" id="BVUL435590:G1G59-377-MONOMER"/>
<dbReference type="BRENDA" id="2.2.1.13">
    <property type="organism ID" value="776"/>
</dbReference>
<dbReference type="Proteomes" id="UP000002861">
    <property type="component" value="Chromosome"/>
</dbReference>
<dbReference type="GO" id="GO:0016740">
    <property type="term" value="F:transferase activity"/>
    <property type="evidence" value="ECO:0007669"/>
    <property type="project" value="UniProtKB-KW"/>
</dbReference>
<dbReference type="CDD" id="cd07033">
    <property type="entry name" value="TPP_PYR_DXS_TK_like"/>
    <property type="match status" value="1"/>
</dbReference>
<dbReference type="FunFam" id="3.40.50.970:FF:000129">
    <property type="entry name" value="Transketolase"/>
    <property type="match status" value="1"/>
</dbReference>
<dbReference type="Gene3D" id="3.40.50.920">
    <property type="match status" value="1"/>
</dbReference>
<dbReference type="Gene3D" id="3.40.50.970">
    <property type="match status" value="1"/>
</dbReference>
<dbReference type="InterPro" id="IPR051157">
    <property type="entry name" value="PDH/Transketolase"/>
</dbReference>
<dbReference type="InterPro" id="IPR029061">
    <property type="entry name" value="THDP-binding"/>
</dbReference>
<dbReference type="InterPro" id="IPR009014">
    <property type="entry name" value="Transketo_C/PFOR_II"/>
</dbReference>
<dbReference type="InterPro" id="IPR005475">
    <property type="entry name" value="Transketolase-like_Pyr-bd"/>
</dbReference>
<dbReference type="InterPro" id="IPR033248">
    <property type="entry name" value="Transketolase_C"/>
</dbReference>
<dbReference type="PANTHER" id="PTHR43825">
    <property type="entry name" value="PYRUVATE DEHYDROGENASE E1 COMPONENT"/>
    <property type="match status" value="1"/>
</dbReference>
<dbReference type="PANTHER" id="PTHR43825:SF1">
    <property type="entry name" value="TRANSKETOLASE-LIKE PYRIMIDINE-BINDING DOMAIN-CONTAINING PROTEIN"/>
    <property type="match status" value="1"/>
</dbReference>
<dbReference type="Pfam" id="PF02779">
    <property type="entry name" value="Transket_pyr"/>
    <property type="match status" value="1"/>
</dbReference>
<dbReference type="Pfam" id="PF02780">
    <property type="entry name" value="Transketolase_C"/>
    <property type="match status" value="1"/>
</dbReference>
<dbReference type="SMART" id="SM00861">
    <property type="entry name" value="Transket_pyr"/>
    <property type="match status" value="1"/>
</dbReference>
<dbReference type="SUPFAM" id="SSF52518">
    <property type="entry name" value="Thiamin diphosphate-binding fold (THDP-binding)"/>
    <property type="match status" value="1"/>
</dbReference>
<dbReference type="SUPFAM" id="SSF52922">
    <property type="entry name" value="TK C-terminal domain-like"/>
    <property type="match status" value="1"/>
</dbReference>
<reference key="1">
    <citation type="journal article" date="2007" name="PLoS Biol.">
        <title>Evolution of symbiotic bacteria in the distal human intestine.</title>
        <authorList>
            <person name="Xu J."/>
            <person name="Mahowald M.A."/>
            <person name="Ley R.E."/>
            <person name="Lozupone C.A."/>
            <person name="Hamady M."/>
            <person name="Martens E.C."/>
            <person name="Henrissat B."/>
            <person name="Coutinho P.M."/>
            <person name="Minx P."/>
            <person name="Latreille P."/>
            <person name="Cordum H."/>
            <person name="Van Brunt A."/>
            <person name="Kim K."/>
            <person name="Fulton R.S."/>
            <person name="Fulton L.A."/>
            <person name="Clifton S.W."/>
            <person name="Wilson R.K."/>
            <person name="Knight R.D."/>
            <person name="Gordon J.I."/>
        </authorList>
    </citation>
    <scope>NUCLEOTIDE SEQUENCE [LARGE SCALE GENOMIC DNA]</scope>
    <source>
        <strain>ATCC 8482 / DSM 1447 / JCM 5826 / CCUG 4940 / NBRC 14291 / NCTC 11154</strain>
    </source>
</reference>
<reference key="2">
    <citation type="journal article" date="2018" name="Nat. Chem. Biol.">
        <title>Functional assignment of multiple catabolic pathways for D-apiose.</title>
        <authorList>
            <person name="Carter M.S."/>
            <person name="Zhang X."/>
            <person name="Huang H."/>
            <person name="Bouvier J.T."/>
            <person name="Francisco B.S."/>
            <person name="Vetting M.W."/>
            <person name="Al-Obaidi N."/>
            <person name="Bonanno J.B."/>
            <person name="Ghosh A."/>
            <person name="Zallot R.G."/>
            <person name="Andersen H.M."/>
            <person name="Almo S.C."/>
            <person name="Gerlt J.A."/>
        </authorList>
    </citation>
    <scope>FUNCTION</scope>
    <scope>CATALYTIC ACTIVITY</scope>
    <scope>PATHWAY</scope>
    <scope>SUBUNIT</scope>
</reference>
<sequence length="312" mass="33693">MANNMIACRKSFTDTLLELARQDKDIVAVTTDARGSVTLGDFAKELPAQFVECGIAEQDAVGISAGLAHSGKKVFVCGPACFYVARSLEQVKVDLAYSQNNVKILGVSGGVAYGALGATHHSLHDIAVLRTFPGMNIVLPCDARQTRKLVKLLVDYPEPVYVRVGRAAVPDVYENDDFEFVLGKANTLLDGTDLTIIAAGETVYHAYQAGLMLREKGIQARVLDMSSIKPVDVEAIRKAAEETGRIITVEEHSRFGGLGAIVVETLSENPVPVRIIGIPDENVVHGNSHEIFAHYGLDKEGICKTALEFVKK</sequence>
<accession>A6KXB3</accession>
<comment type="function">
    <text evidence="2">Involved in catabolism of D-apiose. Catalyzes the transfer of the glycolaldehyde group from apulose-4-phosphate to D-glyceraldehyde 3-phosphate, generating dihydroxyacetone phosphate and D-xylulose-5-phosphate.</text>
</comment>
<comment type="catalytic activity">
    <reaction evidence="2">
        <text>apulose 4-phosphate + D-glyceraldehyde 3-phosphate = D-xylulose 5-phosphate + dihydroxyacetone phosphate</text>
        <dbReference type="Rhea" id="RHEA:57024"/>
        <dbReference type="ChEBI" id="CHEBI:57642"/>
        <dbReference type="ChEBI" id="CHEBI:57737"/>
        <dbReference type="ChEBI" id="CHEBI:59776"/>
        <dbReference type="ChEBI" id="CHEBI:141351"/>
        <dbReference type="EC" id="2.2.1.13"/>
    </reaction>
</comment>
<comment type="cofactor">
    <cofactor evidence="1">
        <name>thiamine diphosphate</name>
        <dbReference type="ChEBI" id="CHEBI:58937"/>
    </cofactor>
</comment>
<comment type="pathway">
    <text evidence="2">Carbohydrate metabolism.</text>
</comment>
<comment type="subunit">
    <text evidence="4">Probable heterodimer composed of AptA and AptB.</text>
</comment>
<comment type="similarity">
    <text evidence="3">Belongs to the transketolase family.</text>
</comment>
<proteinExistence type="evidence at protein level"/>
<protein>
    <recommendedName>
        <fullName evidence="3">Apulose-4-phosphate transketolase subunit B</fullName>
        <ecNumber evidence="2">2.2.1.13</ecNumber>
    </recommendedName>
    <alternativeName>
        <fullName evidence="3">Apulose-4-phosphate transketolase C-terminal subunit</fullName>
    </alternativeName>
</protein>